<feature type="chain" id="PRO_0000359705" description="Photosystem II D2 protein">
    <location>
        <begin position="1"/>
        <end position="351"/>
    </location>
</feature>
<feature type="transmembrane region" description="Helical" evidence="1">
    <location>
        <begin position="39"/>
        <end position="59"/>
    </location>
</feature>
<feature type="transmembrane region" description="Helical" evidence="1">
    <location>
        <begin position="123"/>
        <end position="139"/>
    </location>
</feature>
<feature type="transmembrane region" description="Helical" evidence="1">
    <location>
        <begin position="151"/>
        <end position="164"/>
    </location>
</feature>
<feature type="transmembrane region" description="Helical" evidence="1">
    <location>
        <begin position="206"/>
        <end position="226"/>
    </location>
</feature>
<feature type="transmembrane region" description="Helical" evidence="1">
    <location>
        <begin position="277"/>
        <end position="293"/>
    </location>
</feature>
<feature type="binding site" description="axial binding residue" evidence="1">
    <location>
        <position position="116"/>
    </location>
    <ligand>
        <name>chlorophyll a</name>
        <dbReference type="ChEBI" id="CHEBI:58416"/>
        <label>ChlzD2</label>
    </ligand>
    <ligandPart>
        <name>Mg</name>
        <dbReference type="ChEBI" id="CHEBI:25107"/>
    </ligandPart>
</feature>
<feature type="binding site" evidence="1">
    <location>
        <position position="128"/>
    </location>
    <ligand>
        <name>pheophytin a</name>
        <dbReference type="ChEBI" id="CHEBI:136840"/>
        <label>D2</label>
    </ligand>
</feature>
<feature type="binding site" evidence="1">
    <location>
        <position position="141"/>
    </location>
    <ligand>
        <name>pheophytin a</name>
        <dbReference type="ChEBI" id="CHEBI:136840"/>
        <label>D2</label>
    </ligand>
</feature>
<feature type="binding site" description="axial binding residue" evidence="1">
    <location>
        <position position="196"/>
    </location>
    <ligand>
        <name>chlorophyll a</name>
        <dbReference type="ChEBI" id="CHEBI:58416"/>
        <label>PD2</label>
    </ligand>
    <ligandPart>
        <name>Mg</name>
        <dbReference type="ChEBI" id="CHEBI:25107"/>
    </ligandPart>
</feature>
<feature type="binding site" evidence="1">
    <location>
        <position position="213"/>
    </location>
    <ligand>
        <name>a plastoquinone</name>
        <dbReference type="ChEBI" id="CHEBI:17757"/>
        <label>Q(A)</label>
    </ligand>
</feature>
<feature type="binding site" evidence="1">
    <location>
        <position position="213"/>
    </location>
    <ligand>
        <name>Fe cation</name>
        <dbReference type="ChEBI" id="CHEBI:24875"/>
        <note>ligand shared with heterodimeric partner</note>
    </ligand>
</feature>
<feature type="binding site" evidence="1">
    <location>
        <position position="260"/>
    </location>
    <ligand>
        <name>a plastoquinone</name>
        <dbReference type="ChEBI" id="CHEBI:17757"/>
        <label>Q(A)</label>
    </ligand>
</feature>
<feature type="binding site" evidence="1">
    <location>
        <position position="267"/>
    </location>
    <ligand>
        <name>Fe cation</name>
        <dbReference type="ChEBI" id="CHEBI:24875"/>
        <note>ligand shared with heterodimeric partner</note>
    </ligand>
</feature>
<proteinExistence type="inferred from homology"/>
<organism>
    <name type="scientific">Gracilaria tenuistipitata var. liui</name>
    <name type="common">Red alga</name>
    <dbReference type="NCBI Taxonomy" id="285951"/>
    <lineage>
        <taxon>Eukaryota</taxon>
        <taxon>Rhodophyta</taxon>
        <taxon>Florideophyceae</taxon>
        <taxon>Rhodymeniophycidae</taxon>
        <taxon>Gracilariales</taxon>
        <taxon>Gracilariaceae</taxon>
        <taxon>Gracilaria</taxon>
        <taxon>Gracilaria tenuistipitata</taxon>
    </lineage>
</organism>
<protein>
    <recommendedName>
        <fullName evidence="1">Photosystem II D2 protein</fullName>
        <shortName evidence="1">PSII D2 protein</shortName>
        <ecNumber evidence="1">1.10.3.9</ecNumber>
    </recommendedName>
    <alternativeName>
        <fullName evidence="1">Photosystem Q(A) protein</fullName>
    </alternativeName>
</protein>
<dbReference type="EC" id="1.10.3.9" evidence="1"/>
<dbReference type="EMBL" id="AY673996">
    <property type="protein sequence ID" value="AAT79617.1"/>
    <property type="molecule type" value="Genomic_DNA"/>
</dbReference>
<dbReference type="RefSeq" id="YP_063542.1">
    <property type="nucleotide sequence ID" value="NC_006137.1"/>
</dbReference>
<dbReference type="SMR" id="Q6B918"/>
<dbReference type="GeneID" id="2944042"/>
<dbReference type="GO" id="GO:0009535">
    <property type="term" value="C:chloroplast thylakoid membrane"/>
    <property type="evidence" value="ECO:0007669"/>
    <property type="project" value="UniProtKB-SubCell"/>
</dbReference>
<dbReference type="GO" id="GO:0009523">
    <property type="term" value="C:photosystem II"/>
    <property type="evidence" value="ECO:0007669"/>
    <property type="project" value="UniProtKB-KW"/>
</dbReference>
<dbReference type="GO" id="GO:0016168">
    <property type="term" value="F:chlorophyll binding"/>
    <property type="evidence" value="ECO:0007669"/>
    <property type="project" value="UniProtKB-UniRule"/>
</dbReference>
<dbReference type="GO" id="GO:0045156">
    <property type="term" value="F:electron transporter, transferring electrons within the cyclic electron transport pathway of photosynthesis activity"/>
    <property type="evidence" value="ECO:0007669"/>
    <property type="project" value="InterPro"/>
</dbReference>
<dbReference type="GO" id="GO:0005506">
    <property type="term" value="F:iron ion binding"/>
    <property type="evidence" value="ECO:0007669"/>
    <property type="project" value="UniProtKB-UniRule"/>
</dbReference>
<dbReference type="GO" id="GO:0016491">
    <property type="term" value="F:oxidoreductase activity"/>
    <property type="evidence" value="ECO:0007669"/>
    <property type="project" value="UniProtKB-KW"/>
</dbReference>
<dbReference type="GO" id="GO:0009772">
    <property type="term" value="P:photosynthetic electron transport in photosystem II"/>
    <property type="evidence" value="ECO:0007669"/>
    <property type="project" value="InterPro"/>
</dbReference>
<dbReference type="CDD" id="cd09288">
    <property type="entry name" value="Photosystem-II_D2"/>
    <property type="match status" value="1"/>
</dbReference>
<dbReference type="FunFam" id="1.20.85.10:FF:000001">
    <property type="entry name" value="photosystem II D2 protein-like"/>
    <property type="match status" value="1"/>
</dbReference>
<dbReference type="Gene3D" id="1.20.85.10">
    <property type="entry name" value="Photosystem II protein D1-like"/>
    <property type="match status" value="1"/>
</dbReference>
<dbReference type="HAMAP" id="MF_01383">
    <property type="entry name" value="PSII_PsbD_D2"/>
    <property type="match status" value="1"/>
</dbReference>
<dbReference type="InterPro" id="IPR055266">
    <property type="entry name" value="D1/D2"/>
</dbReference>
<dbReference type="InterPro" id="IPR036854">
    <property type="entry name" value="Photo_II_D1/D2_sf"/>
</dbReference>
<dbReference type="InterPro" id="IPR000484">
    <property type="entry name" value="Photo_RC_L/M"/>
</dbReference>
<dbReference type="InterPro" id="IPR055265">
    <property type="entry name" value="Photo_RC_L/M_CS"/>
</dbReference>
<dbReference type="InterPro" id="IPR005868">
    <property type="entry name" value="PSII_PsbD/D2"/>
</dbReference>
<dbReference type="NCBIfam" id="TIGR01152">
    <property type="entry name" value="psbD"/>
    <property type="match status" value="1"/>
</dbReference>
<dbReference type="PANTHER" id="PTHR33149:SF12">
    <property type="entry name" value="PHOTOSYSTEM II D2 PROTEIN"/>
    <property type="match status" value="1"/>
</dbReference>
<dbReference type="PANTHER" id="PTHR33149">
    <property type="entry name" value="PHOTOSYSTEM II PROTEIN D1"/>
    <property type="match status" value="1"/>
</dbReference>
<dbReference type="Pfam" id="PF00124">
    <property type="entry name" value="Photo_RC"/>
    <property type="match status" value="1"/>
</dbReference>
<dbReference type="PRINTS" id="PR00256">
    <property type="entry name" value="REACTNCENTRE"/>
</dbReference>
<dbReference type="SUPFAM" id="SSF81483">
    <property type="entry name" value="Bacterial photosystem II reaction centre, L and M subunits"/>
    <property type="match status" value="1"/>
</dbReference>
<dbReference type="PROSITE" id="PS00244">
    <property type="entry name" value="REACTION_CENTER"/>
    <property type="match status" value="1"/>
</dbReference>
<geneLocation type="chloroplast"/>
<evidence type="ECO:0000255" key="1">
    <source>
        <dbReference type="HAMAP-Rule" id="MF_01383"/>
    </source>
</evidence>
<sequence>MTIAIGQEKTRGRFDLIDDWVKRDRFVFVGWSGLLLFPCSYLALGGWLTGTTFVTSWYTHGLASSYLEGCNFLTSAVSTPANSMGHSLLLLWGPEAQGDFTRWCQIGGLWAFIALHGSFGLIGFCLRQFEIARLVGIRPYNAIAFSGPIAVFVSVFLMYPLGQASWFFAPSFGVAAIFRFLLFLQGFHNWTLNPFHMMGVAGILGGALLCAIHGATVQNTLFEDGDAADTFRAFTPTQSEETYSMVTANRFWSQIFGVAFSNKRWLHFFMLFVPVTGLWTSAFGIVGLALNLRAYDFVSQELRAAEDPEFETFYTKNILLNEGIRAWMAAQDQPHENFIFPEEVLPRGNAL</sequence>
<accession>Q6B918</accession>
<reference key="1">
    <citation type="journal article" date="2004" name="J. Mol. Evol.">
        <title>Comparative analysis of the complete plastid genome sequence of the red alga Gracilaria tenuistipitata var. liui provides insights into the evolution of rhodoplasts and their relationship to other plastids.</title>
        <authorList>
            <person name="Hagopian J.C."/>
            <person name="Reis M."/>
            <person name="Kitajima J.P."/>
            <person name="Bhattacharya D."/>
            <person name="de Oliveira M.C."/>
        </authorList>
    </citation>
    <scope>NUCLEOTIDE SEQUENCE [LARGE SCALE GENOMIC DNA]</scope>
</reference>
<gene>
    <name evidence="1" type="primary">psbD</name>
    <name type="ordered locus">Grc000035</name>
</gene>
<keyword id="KW-0148">Chlorophyll</keyword>
<keyword id="KW-0150">Chloroplast</keyword>
<keyword id="KW-0157">Chromophore</keyword>
<keyword id="KW-0249">Electron transport</keyword>
<keyword id="KW-0408">Iron</keyword>
<keyword id="KW-0460">Magnesium</keyword>
<keyword id="KW-0472">Membrane</keyword>
<keyword id="KW-0479">Metal-binding</keyword>
<keyword id="KW-0560">Oxidoreductase</keyword>
<keyword id="KW-0602">Photosynthesis</keyword>
<keyword id="KW-0604">Photosystem II</keyword>
<keyword id="KW-0934">Plastid</keyword>
<keyword id="KW-0793">Thylakoid</keyword>
<keyword id="KW-0812">Transmembrane</keyword>
<keyword id="KW-1133">Transmembrane helix</keyword>
<keyword id="KW-0813">Transport</keyword>
<comment type="function">
    <text evidence="1">Photosystem II (PSII) is a light-driven water:plastoquinone oxidoreductase that uses light energy to abstract electrons from H(2)O, generating O(2) and a proton gradient subsequently used for ATP formation. It consists of a core antenna complex that captures photons, and an electron transfer chain that converts photonic excitation into a charge separation. The D1/D2 (PsbA/PsbD) reaction center heterodimer binds P680, the primary electron donor of PSII as well as several subsequent electron acceptors. D2 is needed for assembly of a stable PSII complex.</text>
</comment>
<comment type="catalytic activity">
    <reaction evidence="1">
        <text>2 a plastoquinone + 4 hnu + 2 H2O = 2 a plastoquinol + O2</text>
        <dbReference type="Rhea" id="RHEA:36359"/>
        <dbReference type="Rhea" id="RHEA-COMP:9561"/>
        <dbReference type="Rhea" id="RHEA-COMP:9562"/>
        <dbReference type="ChEBI" id="CHEBI:15377"/>
        <dbReference type="ChEBI" id="CHEBI:15379"/>
        <dbReference type="ChEBI" id="CHEBI:17757"/>
        <dbReference type="ChEBI" id="CHEBI:30212"/>
        <dbReference type="ChEBI" id="CHEBI:62192"/>
        <dbReference type="EC" id="1.10.3.9"/>
    </reaction>
</comment>
<comment type="cofactor">
    <text evidence="1">The D1/D2 heterodimer binds P680, chlorophylls that are the primary electron donor of PSII, and subsequent electron acceptors. It shares a non-heme iron and each subunit binds pheophytin, quinone, additional chlorophylls, carotenoids and lipids. There is also a Cl(-1) ion associated with D1 and D2, which is required for oxygen evolution. The PSII complex binds additional chlorophylls, carotenoids and specific lipids.</text>
</comment>
<comment type="subunit">
    <text evidence="1">PSII is composed of 1 copy each of membrane proteins PsbA, PsbB, PsbC, PsbD, PsbE, PsbF, PsbH, PsbI, PsbJ, PsbK, PsbL, PsbM, PsbT, PsbX, PsbY, PsbZ, Psb30/Ycf12, at least 3 peripheral proteins of the oxygen-evolving complex and a large number of cofactors. It forms dimeric complexes.</text>
</comment>
<comment type="subcellular location">
    <subcellularLocation>
        <location evidence="1">Plastid</location>
        <location evidence="1">Chloroplast thylakoid membrane</location>
        <topology evidence="1">Multi-pass membrane protein</topology>
    </subcellularLocation>
</comment>
<comment type="miscellaneous">
    <text evidence="1">2 of the reaction center chlorophylls (ChlD1 and ChlD2) are entirely coordinated by water.</text>
</comment>
<comment type="similarity">
    <text evidence="1">Belongs to the reaction center PufL/M/PsbA/D family.</text>
</comment>
<name>PSBD_GRATL</name>